<protein>
    <recommendedName>
        <fullName>Histone H2B</fullName>
    </recommendedName>
</protein>
<dbReference type="EMBL" id="AB105182">
    <property type="protein sequence ID" value="BAD02434.1"/>
    <property type="molecule type" value="Genomic_DNA"/>
</dbReference>
<dbReference type="EMBL" id="AJ224806">
    <property type="status" value="NOT_ANNOTATED_CDS"/>
    <property type="molecule type" value="Genomic_DNA"/>
</dbReference>
<dbReference type="SMR" id="Q76FE5"/>
<dbReference type="GlyCosmos" id="Q76FE5">
    <property type="glycosylation" value="1 site, No reported glycans"/>
</dbReference>
<dbReference type="Proteomes" id="UP000515162">
    <property type="component" value="Unplaced"/>
</dbReference>
<dbReference type="GO" id="GO:0000786">
    <property type="term" value="C:nucleosome"/>
    <property type="evidence" value="ECO:0007669"/>
    <property type="project" value="UniProtKB-KW"/>
</dbReference>
<dbReference type="GO" id="GO:0005634">
    <property type="term" value="C:nucleus"/>
    <property type="evidence" value="ECO:0007669"/>
    <property type="project" value="UniProtKB-SubCell"/>
</dbReference>
<dbReference type="GO" id="GO:0003677">
    <property type="term" value="F:DNA binding"/>
    <property type="evidence" value="ECO:0007669"/>
    <property type="project" value="UniProtKB-KW"/>
</dbReference>
<dbReference type="GO" id="GO:0046982">
    <property type="term" value="F:protein heterodimerization activity"/>
    <property type="evidence" value="ECO:0007669"/>
    <property type="project" value="InterPro"/>
</dbReference>
<dbReference type="GO" id="GO:0044877">
    <property type="term" value="F:protein-containing complex binding"/>
    <property type="evidence" value="ECO:0000250"/>
    <property type="project" value="UniProtKB"/>
</dbReference>
<dbReference type="GO" id="GO:0030527">
    <property type="term" value="F:structural constituent of chromatin"/>
    <property type="evidence" value="ECO:0007669"/>
    <property type="project" value="InterPro"/>
</dbReference>
<dbReference type="CDD" id="cd22910">
    <property type="entry name" value="HFD_H2B"/>
    <property type="match status" value="1"/>
</dbReference>
<dbReference type="FunFam" id="1.10.20.10:FF:000016">
    <property type="entry name" value="Histone H2B"/>
    <property type="match status" value="1"/>
</dbReference>
<dbReference type="Gene3D" id="1.10.20.10">
    <property type="entry name" value="Histone, subunit A"/>
    <property type="match status" value="1"/>
</dbReference>
<dbReference type="InterPro" id="IPR009072">
    <property type="entry name" value="Histone-fold"/>
</dbReference>
<dbReference type="InterPro" id="IPR007125">
    <property type="entry name" value="Histone_H2A/H2B/H3"/>
</dbReference>
<dbReference type="InterPro" id="IPR000558">
    <property type="entry name" value="Histone_H2B"/>
</dbReference>
<dbReference type="InterPro" id="IPR055333">
    <property type="entry name" value="HISTONE_H2B_site"/>
</dbReference>
<dbReference type="PANTHER" id="PTHR23428">
    <property type="entry name" value="HISTONE H2B"/>
    <property type="match status" value="1"/>
</dbReference>
<dbReference type="Pfam" id="PF00125">
    <property type="entry name" value="Histone"/>
    <property type="match status" value="1"/>
</dbReference>
<dbReference type="PRINTS" id="PR00621">
    <property type="entry name" value="HISTONEH2B"/>
</dbReference>
<dbReference type="SMART" id="SM00427">
    <property type="entry name" value="H2B"/>
    <property type="match status" value="1"/>
</dbReference>
<dbReference type="SUPFAM" id="SSF47113">
    <property type="entry name" value="Histone-fold"/>
    <property type="match status" value="1"/>
</dbReference>
<dbReference type="PROSITE" id="PS00357">
    <property type="entry name" value="HISTONE_H2B"/>
    <property type="match status" value="1"/>
</dbReference>
<reference key="1">
    <citation type="journal article" date="2003" name="Genes Genet. Syst.">
        <title>Divergence and heterogeneity of the histone gene repeating units in the Drosophila melanogaster species subgroup.</title>
        <authorList>
            <person name="Kakita M."/>
            <person name="Shimizu T."/>
            <person name="Emoto M."/>
            <person name="Nagai M."/>
            <person name="Takeguchi M."/>
            <person name="Hosono Y."/>
            <person name="Kume N."/>
            <person name="Ozawa T."/>
            <person name="Ueda M."/>
            <person name="Bhuiyan M.S."/>
            <person name="Matsuo Y."/>
        </authorList>
    </citation>
    <scope>NUCLEOTIDE SEQUENCE [GENOMIC DNA]</scope>
</reference>
<reference key="2">
    <citation type="journal article" date="1999" name="Mol. Biol. Evol.">
        <title>Potentials and limitations of histone repeat sequences for phylogenetic reconstruction of Sophophora.</title>
        <authorList>
            <person name="Baldo A.M."/>
            <person name="Les D.H."/>
            <person name="Strausbaugh L.D."/>
        </authorList>
    </citation>
    <scope>NUCLEOTIDE SEQUENCE [GENOMIC DNA] OF 1-45</scope>
</reference>
<gene>
    <name type="primary">His2B</name>
</gene>
<feature type="initiator methionine" description="Removed" evidence="1">
    <location>
        <position position="1"/>
    </location>
</feature>
<feature type="chain" id="PRO_0000071860" description="Histone H2B">
    <location>
        <begin position="2"/>
        <end position="123"/>
    </location>
</feature>
<feature type="region of interest" description="Disordered" evidence="3">
    <location>
        <begin position="1"/>
        <end position="30"/>
    </location>
</feature>
<feature type="modified residue" description="N-methylproline; partial" evidence="2">
    <location>
        <position position="2"/>
    </location>
</feature>
<feature type="modified residue" description="N6-succinyllysine" evidence="2">
    <location>
        <position position="44"/>
    </location>
</feature>
<feature type="modified residue" description="N6-succinyllysine" evidence="2">
    <location>
        <position position="114"/>
    </location>
</feature>
<feature type="modified residue" description="N6-succinyllysine" evidence="2">
    <location>
        <position position="118"/>
    </location>
</feature>
<feature type="glycosylation site" description="O-linked (GlcNAc) serine" evidence="1">
    <location>
        <position position="110"/>
    </location>
</feature>
<feature type="cross-link" description="Glycyl lysine isopeptide (Lys-Gly) (interchain with G-Cter in ubiquitin)" evidence="2">
    <location>
        <position position="118"/>
    </location>
</feature>
<evidence type="ECO:0000250" key="1"/>
<evidence type="ECO:0000250" key="2">
    <source>
        <dbReference type="UniProtKB" id="P02283"/>
    </source>
</evidence>
<evidence type="ECO:0000256" key="3">
    <source>
        <dbReference type="SAM" id="MobiDB-lite"/>
    </source>
</evidence>
<evidence type="ECO:0000305" key="4"/>
<comment type="function">
    <text>Core component of nucleosome. Nucleosomes wrap and compact DNA into chromatin, limiting DNA accessibility to the cellular machineries which require DNA as a template. Histones thereby play a central role in transcription regulation, DNA repair, DNA replication and chromosomal stability. DNA accessibility is regulated via a complex set of post-translational modifications of histones, also called histone code, and nucleosome remodeling.</text>
</comment>
<comment type="subunit">
    <text>The nucleosome is a histone octamer containing two molecules each of H2A, H2B, H3 and H4 assembled in one H3-H4 heterotetramer and two H2A-H2B heterodimers. The octamer wraps approximately 147 bp of DNA.</text>
</comment>
<comment type="subcellular location">
    <subcellularLocation>
        <location>Nucleus</location>
    </subcellularLocation>
    <subcellularLocation>
        <location>Chromosome</location>
    </subcellularLocation>
</comment>
<comment type="PTM">
    <text evidence="2">Phosphorylated by the catalytic component of the Dbf4-dependent kinase (DDK) complex Cdc7.</text>
</comment>
<comment type="PTM">
    <text evidence="2">Monoubiquitination of Lys-118 by Bre1 gives a specific tag for epigenetic transcriptional activation and is also prerequisite for histone H3 'Lys-4' and 'Lys-79' methylation (By similarity). Deubiquitination of Lys-118 by the SAGA complex is involved in activating transcription of a large subset of genes (By similarity).</text>
</comment>
<comment type="PTM">
    <text evidence="2">Methylation at Pro-2 increases upon heat shock.</text>
</comment>
<comment type="PTM">
    <text evidence="2">GlcNAcylation at Ser-110 promotes monoubiquitination of Lys-118. It fluctuates in response to extracellular glucose, and associates with transcribed genes.</text>
</comment>
<comment type="similarity">
    <text evidence="4">Belongs to the histone H2B family.</text>
</comment>
<proteinExistence type="inferred from homology"/>
<name>H2B_DROMA</name>
<sequence length="123" mass="13696">MPPKTSGKAAKKAGKAQKNITKTDKKKKRKRKESYAIYIYKVLKQVHPDTGISSKAMSIMNSFVNDIFERIAAEASRLAHYNKRSTITSREIQTAVRLLLPGELAKHAVSEGTKAVTKYTSSK</sequence>
<keyword id="KW-0158">Chromosome</keyword>
<keyword id="KW-0238">DNA-binding</keyword>
<keyword id="KW-0325">Glycoprotein</keyword>
<keyword id="KW-1017">Isopeptide bond</keyword>
<keyword id="KW-0488">Methylation</keyword>
<keyword id="KW-0544">Nucleosome core</keyword>
<keyword id="KW-0539">Nucleus</keyword>
<keyword id="KW-0832">Ubl conjugation</keyword>
<accession>Q76FE5</accession>
<organism>
    <name type="scientific">Drosophila mauritiana</name>
    <name type="common">Fruit fly</name>
    <dbReference type="NCBI Taxonomy" id="7226"/>
    <lineage>
        <taxon>Eukaryota</taxon>
        <taxon>Metazoa</taxon>
        <taxon>Ecdysozoa</taxon>
        <taxon>Arthropoda</taxon>
        <taxon>Hexapoda</taxon>
        <taxon>Insecta</taxon>
        <taxon>Pterygota</taxon>
        <taxon>Neoptera</taxon>
        <taxon>Endopterygota</taxon>
        <taxon>Diptera</taxon>
        <taxon>Brachycera</taxon>
        <taxon>Muscomorpha</taxon>
        <taxon>Ephydroidea</taxon>
        <taxon>Drosophilidae</taxon>
        <taxon>Drosophila</taxon>
        <taxon>Sophophora</taxon>
    </lineage>
</organism>